<accession>B3R214</accession>
<keyword id="KW-0963">Cytoplasm</keyword>
<keyword id="KW-0444">Lipid biosynthesis</keyword>
<keyword id="KW-0443">Lipid metabolism</keyword>
<keyword id="KW-0594">Phospholipid biosynthesis</keyword>
<keyword id="KW-1208">Phospholipid metabolism</keyword>
<keyword id="KW-0808">Transferase</keyword>
<name>PLSX_CUPTR</name>
<feature type="chain" id="PRO_1000089897" description="Phosphate acyltransferase">
    <location>
        <begin position="1"/>
        <end position="359"/>
    </location>
</feature>
<feature type="region of interest" description="Disordered" evidence="2">
    <location>
        <begin position="338"/>
        <end position="359"/>
    </location>
</feature>
<organism>
    <name type="scientific">Cupriavidus taiwanensis (strain DSM 17343 / BCRC 17206 / CCUG 44338 / CIP 107171 / LMG 19424 / R1)</name>
    <name type="common">Ralstonia taiwanensis (strain LMG 19424)</name>
    <dbReference type="NCBI Taxonomy" id="977880"/>
    <lineage>
        <taxon>Bacteria</taxon>
        <taxon>Pseudomonadati</taxon>
        <taxon>Pseudomonadota</taxon>
        <taxon>Betaproteobacteria</taxon>
        <taxon>Burkholderiales</taxon>
        <taxon>Burkholderiaceae</taxon>
        <taxon>Cupriavidus</taxon>
    </lineage>
</organism>
<gene>
    <name evidence="1" type="primary">plsX</name>
    <name type="ordered locus">RALTA_A2073</name>
</gene>
<comment type="function">
    <text evidence="1">Catalyzes the reversible formation of acyl-phosphate (acyl-PO(4)) from acyl-[acyl-carrier-protein] (acyl-ACP). This enzyme utilizes acyl-ACP as fatty acyl donor, but not acyl-CoA.</text>
</comment>
<comment type="catalytic activity">
    <reaction evidence="1">
        <text>a fatty acyl-[ACP] + phosphate = an acyl phosphate + holo-[ACP]</text>
        <dbReference type="Rhea" id="RHEA:42292"/>
        <dbReference type="Rhea" id="RHEA-COMP:9685"/>
        <dbReference type="Rhea" id="RHEA-COMP:14125"/>
        <dbReference type="ChEBI" id="CHEBI:43474"/>
        <dbReference type="ChEBI" id="CHEBI:59918"/>
        <dbReference type="ChEBI" id="CHEBI:64479"/>
        <dbReference type="ChEBI" id="CHEBI:138651"/>
        <dbReference type="EC" id="2.3.1.274"/>
    </reaction>
</comment>
<comment type="pathway">
    <text evidence="1">Lipid metabolism; phospholipid metabolism.</text>
</comment>
<comment type="subunit">
    <text evidence="1">Homodimer. Probably interacts with PlsY.</text>
</comment>
<comment type="subcellular location">
    <subcellularLocation>
        <location evidence="1">Cytoplasm</location>
    </subcellularLocation>
    <text evidence="1">Associated with the membrane possibly through PlsY.</text>
</comment>
<comment type="similarity">
    <text evidence="1">Belongs to the PlsX family.</text>
</comment>
<dbReference type="EC" id="2.3.1.274" evidence="1"/>
<dbReference type="EMBL" id="CU633749">
    <property type="protein sequence ID" value="CAQ70011.1"/>
    <property type="molecule type" value="Genomic_DNA"/>
</dbReference>
<dbReference type="RefSeq" id="WP_012353319.1">
    <property type="nucleotide sequence ID" value="NC_010528.1"/>
</dbReference>
<dbReference type="SMR" id="B3R214"/>
<dbReference type="GeneID" id="29760586"/>
<dbReference type="KEGG" id="cti:RALTA_A2073"/>
<dbReference type="eggNOG" id="COG0416">
    <property type="taxonomic scope" value="Bacteria"/>
</dbReference>
<dbReference type="HOGENOM" id="CLU_039379_1_0_4"/>
<dbReference type="BioCyc" id="CTAI977880:RALTA_RS10060-MONOMER"/>
<dbReference type="UniPathway" id="UPA00085"/>
<dbReference type="Proteomes" id="UP000001692">
    <property type="component" value="Chromosome 1"/>
</dbReference>
<dbReference type="GO" id="GO:0005737">
    <property type="term" value="C:cytoplasm"/>
    <property type="evidence" value="ECO:0007669"/>
    <property type="project" value="UniProtKB-SubCell"/>
</dbReference>
<dbReference type="GO" id="GO:0043811">
    <property type="term" value="F:phosphate:acyl-[acyl carrier protein] acyltransferase activity"/>
    <property type="evidence" value="ECO:0007669"/>
    <property type="project" value="UniProtKB-UniRule"/>
</dbReference>
<dbReference type="GO" id="GO:0006633">
    <property type="term" value="P:fatty acid biosynthetic process"/>
    <property type="evidence" value="ECO:0007669"/>
    <property type="project" value="UniProtKB-UniRule"/>
</dbReference>
<dbReference type="GO" id="GO:0008654">
    <property type="term" value="P:phospholipid biosynthetic process"/>
    <property type="evidence" value="ECO:0007669"/>
    <property type="project" value="UniProtKB-KW"/>
</dbReference>
<dbReference type="Gene3D" id="3.40.718.10">
    <property type="entry name" value="Isopropylmalate Dehydrogenase"/>
    <property type="match status" value="1"/>
</dbReference>
<dbReference type="HAMAP" id="MF_00019">
    <property type="entry name" value="PlsX"/>
    <property type="match status" value="1"/>
</dbReference>
<dbReference type="InterPro" id="IPR003664">
    <property type="entry name" value="FA_synthesis"/>
</dbReference>
<dbReference type="InterPro" id="IPR012281">
    <property type="entry name" value="Phospholipid_synth_PlsX-like"/>
</dbReference>
<dbReference type="NCBIfam" id="TIGR00182">
    <property type="entry name" value="plsX"/>
    <property type="match status" value="1"/>
</dbReference>
<dbReference type="PANTHER" id="PTHR30100">
    <property type="entry name" value="FATTY ACID/PHOSPHOLIPID SYNTHESIS PROTEIN PLSX"/>
    <property type="match status" value="1"/>
</dbReference>
<dbReference type="PANTHER" id="PTHR30100:SF1">
    <property type="entry name" value="PHOSPHATE ACYLTRANSFERASE"/>
    <property type="match status" value="1"/>
</dbReference>
<dbReference type="Pfam" id="PF02504">
    <property type="entry name" value="FA_synthesis"/>
    <property type="match status" value="1"/>
</dbReference>
<dbReference type="PIRSF" id="PIRSF002465">
    <property type="entry name" value="Phsphlp_syn_PlsX"/>
    <property type="match status" value="1"/>
</dbReference>
<dbReference type="SUPFAM" id="SSF53659">
    <property type="entry name" value="Isocitrate/Isopropylmalate dehydrogenase-like"/>
    <property type="match status" value="1"/>
</dbReference>
<protein>
    <recommendedName>
        <fullName evidence="1">Phosphate acyltransferase</fullName>
        <ecNumber evidence="1">2.3.1.274</ecNumber>
    </recommendedName>
    <alternativeName>
        <fullName evidence="1">Acyl-ACP phosphotransacylase</fullName>
    </alternativeName>
    <alternativeName>
        <fullName evidence="1">Acyl-[acyl-carrier-protein]--phosphate acyltransferase</fullName>
    </alternativeName>
    <alternativeName>
        <fullName evidence="1">Phosphate-acyl-ACP acyltransferase</fullName>
    </alternativeName>
</protein>
<sequence length="359" mass="38189">MTIKIAIDCMGGDHGVSVTVPAAISFLSRHDDAEMVLVGLPDAIRAQLKKLHALDHPRVSIVEATEVITMDDPVEVALRKKRDSSMRVAVTQVKEGLAGACISAGNTGALMAVSRYVLKTLEGIERPAIATTIPNEQGWGTTVLDLGANADCEPEHLLQFARMAEAMVAVVDHKEHPTVGLLNIGEEVIKGNEVVKRAGELLRASELNFYGNVEGNDIFKGTTDIVVCDGFVGNVALKSTEGLAKMIGSMIKEEFTRSWFTKLLAAVAMPVLSRLARRLDPARYNGASLLGLRGLVIKSHGSADAHSFEWAIKRGYDAAKNGVIARITRAFADKSSAAGGVQSAPETEAPGAHPSPHVA</sequence>
<reference key="1">
    <citation type="journal article" date="2008" name="Genome Res.">
        <title>Genome sequence of the beta-rhizobium Cupriavidus taiwanensis and comparative genomics of rhizobia.</title>
        <authorList>
            <person name="Amadou C."/>
            <person name="Pascal G."/>
            <person name="Mangenot S."/>
            <person name="Glew M."/>
            <person name="Bontemps C."/>
            <person name="Capela D."/>
            <person name="Carrere S."/>
            <person name="Cruveiller S."/>
            <person name="Dossat C."/>
            <person name="Lajus A."/>
            <person name="Marchetti M."/>
            <person name="Poinsot V."/>
            <person name="Rouy Z."/>
            <person name="Servin B."/>
            <person name="Saad M."/>
            <person name="Schenowitz C."/>
            <person name="Barbe V."/>
            <person name="Batut J."/>
            <person name="Medigue C."/>
            <person name="Masson-Boivin C."/>
        </authorList>
    </citation>
    <scope>NUCLEOTIDE SEQUENCE [LARGE SCALE GENOMIC DNA]</scope>
    <source>
        <strain>DSM 17343 / BCRC 17206 / CCUG 44338 / CIP 107171 / LMG 19424 / R1</strain>
    </source>
</reference>
<proteinExistence type="inferred from homology"/>
<evidence type="ECO:0000255" key="1">
    <source>
        <dbReference type="HAMAP-Rule" id="MF_00019"/>
    </source>
</evidence>
<evidence type="ECO:0000256" key="2">
    <source>
        <dbReference type="SAM" id="MobiDB-lite"/>
    </source>
</evidence>